<evidence type="ECO:0000305" key="1"/>
<evidence type="ECO:0000305" key="2">
    <source>
    </source>
</evidence>
<comment type="miscellaneous">
    <text evidence="1">Partially overlaps LCB4.</text>
</comment>
<comment type="caution">
    <text evidence="2">Product of a dubious gene prediction unlikely to encode a functional protein. Because of that it is not part of the S.cerevisiae S288c complete/reference proteome set.</text>
</comment>
<gene>
    <name type="ordered locus">YOR170W</name>
    <name type="ORF">O3610</name>
</gene>
<protein>
    <recommendedName>
        <fullName>Putative uncharacterized protein YOR170W</fullName>
    </recommendedName>
</protein>
<organism>
    <name type="scientific">Saccharomyces cerevisiae (strain ATCC 204508 / S288c)</name>
    <name type="common">Baker's yeast</name>
    <dbReference type="NCBI Taxonomy" id="559292"/>
    <lineage>
        <taxon>Eukaryota</taxon>
        <taxon>Fungi</taxon>
        <taxon>Dikarya</taxon>
        <taxon>Ascomycota</taxon>
        <taxon>Saccharomycotina</taxon>
        <taxon>Saccharomycetes</taxon>
        <taxon>Saccharomycetales</taxon>
        <taxon>Saccharomycetaceae</taxon>
        <taxon>Saccharomyces</taxon>
    </lineage>
</organism>
<name>YO170_YEAST</name>
<proteinExistence type="uncertain"/>
<dbReference type="EMBL" id="Z75078">
    <property type="protein sequence ID" value="CAA99377.1"/>
    <property type="molecule type" value="Genomic_DNA"/>
</dbReference>
<dbReference type="PIR" id="S67058">
    <property type="entry name" value="S67058"/>
</dbReference>
<dbReference type="IntAct" id="Q08543">
    <property type="interactions" value="1"/>
</dbReference>
<dbReference type="PaxDb" id="4932-YOR170W"/>
<dbReference type="EnsemblFungi" id="YOR170W_mRNA">
    <property type="protein sequence ID" value="YOR170W"/>
    <property type="gene ID" value="YOR170W"/>
</dbReference>
<dbReference type="AGR" id="SGD:S000005696"/>
<dbReference type="SGD" id="S000005696">
    <property type="gene designation" value="YOR170W"/>
</dbReference>
<dbReference type="HOGENOM" id="CLU_2293879_0_0_1"/>
<reference key="1">
    <citation type="journal article" date="1997" name="Nature">
        <title>The nucleotide sequence of Saccharomyces cerevisiae chromosome XV.</title>
        <authorList>
            <person name="Dujon B."/>
            <person name="Albermann K."/>
            <person name="Aldea M."/>
            <person name="Alexandraki D."/>
            <person name="Ansorge W."/>
            <person name="Arino J."/>
            <person name="Benes V."/>
            <person name="Bohn C."/>
            <person name="Bolotin-Fukuhara M."/>
            <person name="Bordonne R."/>
            <person name="Boyer J."/>
            <person name="Camasses A."/>
            <person name="Casamayor A."/>
            <person name="Casas C."/>
            <person name="Cheret G."/>
            <person name="Cziepluch C."/>
            <person name="Daignan-Fornier B."/>
            <person name="Dang V.-D."/>
            <person name="de Haan M."/>
            <person name="Delius H."/>
            <person name="Durand P."/>
            <person name="Fairhead C."/>
            <person name="Feldmann H."/>
            <person name="Gaillon L."/>
            <person name="Galisson F."/>
            <person name="Gamo F.-J."/>
            <person name="Gancedo C."/>
            <person name="Goffeau A."/>
            <person name="Goulding S.E."/>
            <person name="Grivell L.A."/>
            <person name="Habbig B."/>
            <person name="Hand N.J."/>
            <person name="Hani J."/>
            <person name="Hattenhorst U."/>
            <person name="Hebling U."/>
            <person name="Hernando Y."/>
            <person name="Herrero E."/>
            <person name="Heumann K."/>
            <person name="Hiesel R."/>
            <person name="Hilger F."/>
            <person name="Hofmann B."/>
            <person name="Hollenberg C.P."/>
            <person name="Hughes B."/>
            <person name="Jauniaux J.-C."/>
            <person name="Kalogeropoulos A."/>
            <person name="Katsoulou C."/>
            <person name="Kordes E."/>
            <person name="Lafuente M.J."/>
            <person name="Landt O."/>
            <person name="Louis E.J."/>
            <person name="Maarse A.C."/>
            <person name="Madania A."/>
            <person name="Mannhaupt G."/>
            <person name="Marck C."/>
            <person name="Martin R.P."/>
            <person name="Mewes H.-W."/>
            <person name="Michaux G."/>
            <person name="Paces V."/>
            <person name="Parle-McDermott A.G."/>
            <person name="Pearson B.M."/>
            <person name="Perrin A."/>
            <person name="Pettersson B."/>
            <person name="Poch O."/>
            <person name="Pohl T.M."/>
            <person name="Poirey R."/>
            <person name="Portetelle D."/>
            <person name="Pujol A."/>
            <person name="Purnelle B."/>
            <person name="Ramezani Rad M."/>
            <person name="Rechmann S."/>
            <person name="Schwager C."/>
            <person name="Schweizer M."/>
            <person name="Sor F."/>
            <person name="Sterky F."/>
            <person name="Tarassov I.A."/>
            <person name="Teodoru C."/>
            <person name="Tettelin H."/>
            <person name="Thierry A."/>
            <person name="Tobiasch E."/>
            <person name="Tzermia M."/>
            <person name="Uhlen M."/>
            <person name="Unseld M."/>
            <person name="Valens M."/>
            <person name="Vandenbol M."/>
            <person name="Vetter I."/>
            <person name="Vlcek C."/>
            <person name="Voet M."/>
            <person name="Volckaert G."/>
            <person name="Voss H."/>
            <person name="Wambutt R."/>
            <person name="Wedler H."/>
            <person name="Wiemann S."/>
            <person name="Winsor B."/>
            <person name="Wolfe K.H."/>
            <person name="Zollner A."/>
            <person name="Zumstein E."/>
            <person name="Kleine K."/>
        </authorList>
    </citation>
    <scope>NUCLEOTIDE SEQUENCE [LARGE SCALE GENOMIC DNA]</scope>
    <source>
        <strain>ATCC 204508 / S288c</strain>
    </source>
</reference>
<reference key="2">
    <citation type="journal article" date="2014" name="G3 (Bethesda)">
        <title>The reference genome sequence of Saccharomyces cerevisiae: Then and now.</title>
        <authorList>
            <person name="Engel S.R."/>
            <person name="Dietrich F.S."/>
            <person name="Fisk D.G."/>
            <person name="Binkley G."/>
            <person name="Balakrishnan R."/>
            <person name="Costanzo M.C."/>
            <person name="Dwight S.S."/>
            <person name="Hitz B.C."/>
            <person name="Karra K."/>
            <person name="Nash R.S."/>
            <person name="Weng S."/>
            <person name="Wong E.D."/>
            <person name="Lloyd P."/>
            <person name="Skrzypek M.S."/>
            <person name="Miyasato S.R."/>
            <person name="Simison M."/>
            <person name="Cherry J.M."/>
        </authorList>
    </citation>
    <scope>GENOME REANNOTATION</scope>
    <source>
        <strain>ATCC 204508 / S288c</strain>
    </source>
</reference>
<feature type="chain" id="PRO_0000299720" description="Putative uncharacterized protein YOR170W">
    <location>
        <begin position="1"/>
        <end position="101"/>
    </location>
</feature>
<sequence>MIYNWGCIIIMKTKMEYKPYSDDRNIISPFLFDVVFLFTKKSFLKENITLIYMDSNSVSIYLPFLSNVLHNMGIISTCKGSKGNFSPSTENKPDSTFGIIL</sequence>
<accession>Q08543</accession>